<accession>Q9C8D1</accession>
<accession>Q8LB50</accession>
<name>PUB20_ARATH</name>
<protein>
    <recommendedName>
        <fullName>U-box domain-containing protein 20</fullName>
        <ecNumber>2.3.2.27</ecNumber>
    </recommendedName>
    <alternativeName>
        <fullName>Plant U-box protein 20</fullName>
    </alternativeName>
    <alternativeName>
        <fullName evidence="2">RING-type E3 ubiquitin transferase PUB20</fullName>
    </alternativeName>
</protein>
<sequence>MGLSLRVRRRGGSVSKKEIIPVTSCSEEVEITIPSQFQCPISYELMKDPVIIASGITYDRENIEKWFESGYQTCPVTNTVLTSLEQIPNHTIRRMIQGWCGSSLGGGIERIPTPRVPVTSHQVSEICERLSAATRRGDYAACMEMVTKMTRLGKESERNRKCVKENGAGLVLCVCFDAFSENANASLLLEETVSVLTWMLPIGLEGQSKLTTTSSFNRLVELLRNGDQNAAFLIKELLELNVTHVHALTKINGVQEAFMKSINRDSTCVNSLISIHHMILTNQETVSRFLELDLVNITVEMLVDSENSVCEKALTVLNVICETKEGREKVRRNKLVIPILVKKILKISEKKDLVSVMWKVCKSGDGSEVEEALRLGAFKKLVVMLQVGCGEGTKEKVTELLKMMNKVMKMNGFVDRSYSSSIEFKHVKKPF</sequence>
<organism>
    <name type="scientific">Arabidopsis thaliana</name>
    <name type="common">Mouse-ear cress</name>
    <dbReference type="NCBI Taxonomy" id="3702"/>
    <lineage>
        <taxon>Eukaryota</taxon>
        <taxon>Viridiplantae</taxon>
        <taxon>Streptophyta</taxon>
        <taxon>Embryophyta</taxon>
        <taxon>Tracheophyta</taxon>
        <taxon>Spermatophyta</taxon>
        <taxon>Magnoliopsida</taxon>
        <taxon>eudicotyledons</taxon>
        <taxon>Gunneridae</taxon>
        <taxon>Pentapetalae</taxon>
        <taxon>rosids</taxon>
        <taxon>malvids</taxon>
        <taxon>Brassicales</taxon>
        <taxon>Brassicaceae</taxon>
        <taxon>Camelineae</taxon>
        <taxon>Arabidopsis</taxon>
    </lineage>
</organism>
<reference key="1">
    <citation type="journal article" date="2000" name="Nature">
        <title>Sequence and analysis of chromosome 1 of the plant Arabidopsis thaliana.</title>
        <authorList>
            <person name="Theologis A."/>
            <person name="Ecker J.R."/>
            <person name="Palm C.J."/>
            <person name="Federspiel N.A."/>
            <person name="Kaul S."/>
            <person name="White O."/>
            <person name="Alonso J."/>
            <person name="Altafi H."/>
            <person name="Araujo R."/>
            <person name="Bowman C.L."/>
            <person name="Brooks S.Y."/>
            <person name="Buehler E."/>
            <person name="Chan A."/>
            <person name="Chao Q."/>
            <person name="Chen H."/>
            <person name="Cheuk R.F."/>
            <person name="Chin C.W."/>
            <person name="Chung M.K."/>
            <person name="Conn L."/>
            <person name="Conway A.B."/>
            <person name="Conway A.R."/>
            <person name="Creasy T.H."/>
            <person name="Dewar K."/>
            <person name="Dunn P."/>
            <person name="Etgu P."/>
            <person name="Feldblyum T.V."/>
            <person name="Feng J.-D."/>
            <person name="Fong B."/>
            <person name="Fujii C.Y."/>
            <person name="Gill J.E."/>
            <person name="Goldsmith A.D."/>
            <person name="Haas B."/>
            <person name="Hansen N.F."/>
            <person name="Hughes B."/>
            <person name="Huizar L."/>
            <person name="Hunter J.L."/>
            <person name="Jenkins J."/>
            <person name="Johnson-Hopson C."/>
            <person name="Khan S."/>
            <person name="Khaykin E."/>
            <person name="Kim C.J."/>
            <person name="Koo H.L."/>
            <person name="Kremenetskaia I."/>
            <person name="Kurtz D.B."/>
            <person name="Kwan A."/>
            <person name="Lam B."/>
            <person name="Langin-Hooper S."/>
            <person name="Lee A."/>
            <person name="Lee J.M."/>
            <person name="Lenz C.A."/>
            <person name="Li J.H."/>
            <person name="Li Y.-P."/>
            <person name="Lin X."/>
            <person name="Liu S.X."/>
            <person name="Liu Z.A."/>
            <person name="Luros J.S."/>
            <person name="Maiti R."/>
            <person name="Marziali A."/>
            <person name="Militscher J."/>
            <person name="Miranda M."/>
            <person name="Nguyen M."/>
            <person name="Nierman W.C."/>
            <person name="Osborne B.I."/>
            <person name="Pai G."/>
            <person name="Peterson J."/>
            <person name="Pham P.K."/>
            <person name="Rizzo M."/>
            <person name="Rooney T."/>
            <person name="Rowley D."/>
            <person name="Sakano H."/>
            <person name="Salzberg S.L."/>
            <person name="Schwartz J.R."/>
            <person name="Shinn P."/>
            <person name="Southwick A.M."/>
            <person name="Sun H."/>
            <person name="Tallon L.J."/>
            <person name="Tambunga G."/>
            <person name="Toriumi M.J."/>
            <person name="Town C.D."/>
            <person name="Utterback T."/>
            <person name="Van Aken S."/>
            <person name="Vaysberg M."/>
            <person name="Vysotskaia V.S."/>
            <person name="Walker M."/>
            <person name="Wu D."/>
            <person name="Yu G."/>
            <person name="Fraser C.M."/>
            <person name="Venter J.C."/>
            <person name="Davis R.W."/>
        </authorList>
    </citation>
    <scope>NUCLEOTIDE SEQUENCE [LARGE SCALE GENOMIC DNA]</scope>
    <source>
        <strain>cv. Columbia</strain>
    </source>
</reference>
<reference key="2">
    <citation type="journal article" date="2017" name="Plant J.">
        <title>Araport11: a complete reannotation of the Arabidopsis thaliana reference genome.</title>
        <authorList>
            <person name="Cheng C.Y."/>
            <person name="Krishnakumar V."/>
            <person name="Chan A.P."/>
            <person name="Thibaud-Nissen F."/>
            <person name="Schobel S."/>
            <person name="Town C.D."/>
        </authorList>
    </citation>
    <scope>GENOME REANNOTATION</scope>
    <source>
        <strain>cv. Columbia</strain>
    </source>
</reference>
<reference key="3">
    <citation type="journal article" date="2003" name="Science">
        <title>Empirical analysis of transcriptional activity in the Arabidopsis genome.</title>
        <authorList>
            <person name="Yamada K."/>
            <person name="Lim J."/>
            <person name="Dale J.M."/>
            <person name="Chen H."/>
            <person name="Shinn P."/>
            <person name="Palm C.J."/>
            <person name="Southwick A.M."/>
            <person name="Wu H.C."/>
            <person name="Kim C.J."/>
            <person name="Nguyen M."/>
            <person name="Pham P.K."/>
            <person name="Cheuk R.F."/>
            <person name="Karlin-Newmann G."/>
            <person name="Liu S.X."/>
            <person name="Lam B."/>
            <person name="Sakano H."/>
            <person name="Wu T."/>
            <person name="Yu G."/>
            <person name="Miranda M."/>
            <person name="Quach H.L."/>
            <person name="Tripp M."/>
            <person name="Chang C.H."/>
            <person name="Lee J.M."/>
            <person name="Toriumi M.J."/>
            <person name="Chan M.M."/>
            <person name="Tang C.C."/>
            <person name="Onodera C.S."/>
            <person name="Deng J.M."/>
            <person name="Akiyama K."/>
            <person name="Ansari Y."/>
            <person name="Arakawa T."/>
            <person name="Banh J."/>
            <person name="Banno F."/>
            <person name="Bowser L."/>
            <person name="Brooks S.Y."/>
            <person name="Carninci P."/>
            <person name="Chao Q."/>
            <person name="Choy N."/>
            <person name="Enju A."/>
            <person name="Goldsmith A.D."/>
            <person name="Gurjal M."/>
            <person name="Hansen N.F."/>
            <person name="Hayashizaki Y."/>
            <person name="Johnson-Hopson C."/>
            <person name="Hsuan V.W."/>
            <person name="Iida K."/>
            <person name="Karnes M."/>
            <person name="Khan S."/>
            <person name="Koesema E."/>
            <person name="Ishida J."/>
            <person name="Jiang P.X."/>
            <person name="Jones T."/>
            <person name="Kawai J."/>
            <person name="Kamiya A."/>
            <person name="Meyers C."/>
            <person name="Nakajima M."/>
            <person name="Narusaka M."/>
            <person name="Seki M."/>
            <person name="Sakurai T."/>
            <person name="Satou M."/>
            <person name="Tamse R."/>
            <person name="Vaysberg M."/>
            <person name="Wallender E.K."/>
            <person name="Wong C."/>
            <person name="Yamamura Y."/>
            <person name="Yuan S."/>
            <person name="Shinozaki K."/>
            <person name="Davis R.W."/>
            <person name="Theologis A."/>
            <person name="Ecker J.R."/>
        </authorList>
    </citation>
    <scope>NUCLEOTIDE SEQUENCE [LARGE SCALE MRNA]</scope>
    <source>
        <strain>cv. Columbia</strain>
    </source>
</reference>
<reference key="4">
    <citation type="submission" date="2002-03" db="EMBL/GenBank/DDBJ databases">
        <title>Full-length cDNA from Arabidopsis thaliana.</title>
        <authorList>
            <person name="Brover V.V."/>
            <person name="Troukhan M.E."/>
            <person name="Alexandrov N.A."/>
            <person name="Lu Y.-P."/>
            <person name="Flavell R.B."/>
            <person name="Feldmann K.A."/>
        </authorList>
    </citation>
    <scope>NUCLEOTIDE SEQUENCE [LARGE SCALE MRNA]</scope>
</reference>
<reference key="5">
    <citation type="journal article" date="2001" name="Trends Plant Sci.">
        <title>The U-box protein family in plants.</title>
        <authorList>
            <person name="Azevedo C."/>
            <person name="Santos-Rosa M.J."/>
            <person name="Shirasu K."/>
        </authorList>
    </citation>
    <scope>GENE FAMILY ORGANIZATION</scope>
    <scope>NOMENCLATURE</scope>
</reference>
<reference key="6">
    <citation type="journal article" date="2004" name="Plant Physiol.">
        <title>A large complement of the predicted Arabidopsis ARM repeat proteins are members of the U-box E3 ubiquitin ligase family.</title>
        <authorList>
            <person name="Mudgil Y."/>
            <person name="Shiu S.-H."/>
            <person name="Stone S.L."/>
            <person name="Salt J.N."/>
            <person name="Goring D.R."/>
        </authorList>
    </citation>
    <scope>GENE FAMILY ORGANIZATION</scope>
</reference>
<evidence type="ECO:0000250" key="1"/>
<evidence type="ECO:0000305" key="2"/>
<dbReference type="EC" id="2.3.2.27"/>
<dbReference type="EMBL" id="AC026480">
    <property type="protein sequence ID" value="AAG51307.1"/>
    <property type="molecule type" value="Genomic_DNA"/>
</dbReference>
<dbReference type="EMBL" id="CP002684">
    <property type="protein sequence ID" value="AEE34470.1"/>
    <property type="molecule type" value="Genomic_DNA"/>
</dbReference>
<dbReference type="EMBL" id="AY034913">
    <property type="protein sequence ID" value="AAK59420.1"/>
    <property type="molecule type" value="mRNA"/>
</dbReference>
<dbReference type="EMBL" id="AY063104">
    <property type="protein sequence ID" value="AAL34278.1"/>
    <property type="molecule type" value="mRNA"/>
</dbReference>
<dbReference type="EMBL" id="AY087421">
    <property type="protein sequence ID" value="AAM64969.1"/>
    <property type="molecule type" value="mRNA"/>
</dbReference>
<dbReference type="PIR" id="D96686">
    <property type="entry name" value="D96686"/>
</dbReference>
<dbReference type="RefSeq" id="NP_564866.1">
    <molecule id="Q9C8D1-1"/>
    <property type="nucleotide sequence ID" value="NM_105287.2"/>
</dbReference>
<dbReference type="SMR" id="Q9C8D1"/>
<dbReference type="BioGRID" id="28152">
    <property type="interactions" value="5"/>
</dbReference>
<dbReference type="FunCoup" id="Q9C8D1">
    <property type="interactions" value="22"/>
</dbReference>
<dbReference type="IntAct" id="Q9C8D1">
    <property type="interactions" value="3"/>
</dbReference>
<dbReference type="STRING" id="3702.Q9C8D1"/>
<dbReference type="iPTMnet" id="Q9C8D1"/>
<dbReference type="PaxDb" id="3702-AT1G66160.1"/>
<dbReference type="ProteomicsDB" id="226451">
    <molecule id="Q9C8D1-1"/>
</dbReference>
<dbReference type="EnsemblPlants" id="AT1G66160.1">
    <molecule id="Q9C8D1-1"/>
    <property type="protein sequence ID" value="AT1G66160.1"/>
    <property type="gene ID" value="AT1G66160"/>
</dbReference>
<dbReference type="GeneID" id="842931"/>
<dbReference type="Gramene" id="AT1G66160.1">
    <molecule id="Q9C8D1-1"/>
    <property type="protein sequence ID" value="AT1G66160.1"/>
    <property type="gene ID" value="AT1G66160"/>
</dbReference>
<dbReference type="KEGG" id="ath:AT1G66160"/>
<dbReference type="Araport" id="AT1G66160"/>
<dbReference type="TAIR" id="AT1G66160">
    <property type="gene designation" value="CMPG1"/>
</dbReference>
<dbReference type="eggNOG" id="ENOG502QS2D">
    <property type="taxonomic scope" value="Eukaryota"/>
</dbReference>
<dbReference type="HOGENOM" id="CLU_006348_1_1_1"/>
<dbReference type="InParanoid" id="Q9C8D1"/>
<dbReference type="PhylomeDB" id="Q9C8D1"/>
<dbReference type="UniPathway" id="UPA00143"/>
<dbReference type="PRO" id="PR:Q9C8D1"/>
<dbReference type="Proteomes" id="UP000006548">
    <property type="component" value="Chromosome 1"/>
</dbReference>
<dbReference type="ExpressionAtlas" id="Q9C8D1">
    <property type="expression patterns" value="baseline and differential"/>
</dbReference>
<dbReference type="GO" id="GO:0061630">
    <property type="term" value="F:ubiquitin protein ligase activity"/>
    <property type="evidence" value="ECO:0007669"/>
    <property type="project" value="InterPro"/>
</dbReference>
<dbReference type="GO" id="GO:0016567">
    <property type="term" value="P:protein ubiquitination"/>
    <property type="evidence" value="ECO:0007669"/>
    <property type="project" value="UniProtKB-UniPathway"/>
</dbReference>
<dbReference type="CDD" id="cd16664">
    <property type="entry name" value="RING-Ubox_PUB"/>
    <property type="match status" value="1"/>
</dbReference>
<dbReference type="FunFam" id="1.25.10.10:FF:001094">
    <property type="entry name" value="RING-type E3 ubiquitin transferase"/>
    <property type="match status" value="1"/>
</dbReference>
<dbReference type="FunFam" id="3.30.40.10:FF:000442">
    <property type="entry name" value="RING-type E3 ubiquitin transferase"/>
    <property type="match status" value="1"/>
</dbReference>
<dbReference type="Gene3D" id="1.25.10.10">
    <property type="entry name" value="Leucine-rich Repeat Variant"/>
    <property type="match status" value="1"/>
</dbReference>
<dbReference type="Gene3D" id="3.30.40.10">
    <property type="entry name" value="Zinc/RING finger domain, C3HC4 (zinc finger)"/>
    <property type="match status" value="1"/>
</dbReference>
<dbReference type="InterPro" id="IPR011989">
    <property type="entry name" value="ARM-like"/>
</dbReference>
<dbReference type="InterPro" id="IPR016024">
    <property type="entry name" value="ARM-type_fold"/>
</dbReference>
<dbReference type="InterPro" id="IPR045185">
    <property type="entry name" value="PUB22/23/24-like"/>
</dbReference>
<dbReference type="InterPro" id="IPR045210">
    <property type="entry name" value="RING-Ubox_PUB"/>
</dbReference>
<dbReference type="InterPro" id="IPR003613">
    <property type="entry name" value="Ubox_domain"/>
</dbReference>
<dbReference type="InterPro" id="IPR013083">
    <property type="entry name" value="Znf_RING/FYVE/PHD"/>
</dbReference>
<dbReference type="PANTHER" id="PTHR22849:SF129">
    <property type="entry name" value="U-BOX DOMAIN-CONTAINING PROTEIN 20"/>
    <property type="match status" value="1"/>
</dbReference>
<dbReference type="PANTHER" id="PTHR22849">
    <property type="entry name" value="WDSAM1 PROTEIN"/>
    <property type="match status" value="1"/>
</dbReference>
<dbReference type="Pfam" id="PF04564">
    <property type="entry name" value="U-box"/>
    <property type="match status" value="1"/>
</dbReference>
<dbReference type="SMART" id="SM00504">
    <property type="entry name" value="Ubox"/>
    <property type="match status" value="1"/>
</dbReference>
<dbReference type="SUPFAM" id="SSF48371">
    <property type="entry name" value="ARM repeat"/>
    <property type="match status" value="1"/>
</dbReference>
<dbReference type="SUPFAM" id="SSF57850">
    <property type="entry name" value="RING/U-box"/>
    <property type="match status" value="1"/>
</dbReference>
<dbReference type="PROSITE" id="PS51698">
    <property type="entry name" value="U_BOX"/>
    <property type="match status" value="1"/>
</dbReference>
<gene>
    <name type="primary">PUB20</name>
    <name type="ordered locus">At1g66160</name>
    <name type="ORF">F15E12.6</name>
</gene>
<keyword id="KW-0025">Alternative splicing</keyword>
<keyword id="KW-1185">Reference proteome</keyword>
<keyword id="KW-0808">Transferase</keyword>
<keyword id="KW-0833">Ubl conjugation pathway</keyword>
<feature type="chain" id="PRO_0000322164" description="U-box domain-containing protein 20">
    <location>
        <begin position="1"/>
        <end position="431"/>
    </location>
</feature>
<feature type="domain" description="U-box">
    <location>
        <begin position="32"/>
        <end position="106"/>
    </location>
</feature>
<feature type="sequence conflict" description="In Ref. 4; AAM64969." evidence="2" ref="4">
    <original>V</original>
    <variation>I</variation>
    <location>
        <position position="123"/>
    </location>
</feature>
<feature type="sequence conflict" description="In Ref. 4; AAM64969." evidence="2" ref="4">
    <original>T</original>
    <variation>K</variation>
    <location>
        <position position="150"/>
    </location>
</feature>
<feature type="sequence conflict" description="In Ref. 4; AAM64969." evidence="2" ref="4">
    <original>M</original>
    <variation>T</variation>
    <location>
        <position position="199"/>
    </location>
</feature>
<feature type="sequence conflict" description="In Ref. 4; AAM64969." evidence="2" ref="4">
    <original>L</original>
    <variation>S</variation>
    <location>
        <position position="204"/>
    </location>
</feature>
<feature type="sequence conflict" description="In Ref. 4; AAM64969." evidence="2" ref="4">
    <original>R</original>
    <variation>K</variation>
    <location>
        <position position="224"/>
    </location>
</feature>
<proteinExistence type="evidence at protein level"/>
<comment type="function">
    <text evidence="1">Functions as an E3 ubiquitin ligase.</text>
</comment>
<comment type="catalytic activity">
    <reaction>
        <text>S-ubiquitinyl-[E2 ubiquitin-conjugating enzyme]-L-cysteine + [acceptor protein]-L-lysine = [E2 ubiquitin-conjugating enzyme]-L-cysteine + N(6)-ubiquitinyl-[acceptor protein]-L-lysine.</text>
        <dbReference type="EC" id="2.3.2.27"/>
    </reaction>
</comment>
<comment type="pathway">
    <text>Protein modification; protein ubiquitination.</text>
</comment>
<comment type="interaction">
    <interactant intactId="EBI-25516153">
        <id>Q9C8D1</id>
    </interactant>
    <interactant intactId="EBI-617095">
        <id>Q9LEZ3</id>
        <label>BIM1</label>
    </interactant>
    <organismsDiffer>false</organismsDiffer>
    <experiments>3</experiments>
</comment>
<comment type="interaction">
    <interactant intactId="EBI-25516153">
        <id>Q9C8D1</id>
    </interactant>
    <interactant intactId="EBI-4426649">
        <id>Q17TI5</id>
        <label>BRX</label>
    </interactant>
    <organismsDiffer>false</organismsDiffer>
    <experiments>3</experiments>
</comment>
<comment type="interaction">
    <interactant intactId="EBI-25516153">
        <id>Q9C8D1</id>
    </interactant>
    <interactant intactId="EBI-25506855">
        <id>O23160</id>
        <label>MYB73</label>
    </interactant>
    <organismsDiffer>false</organismsDiffer>
    <experiments>3</experiments>
</comment>
<comment type="alternative products">
    <event type="alternative splicing"/>
    <isoform>
        <id>Q9C8D1-1</id>
        <name>1</name>
        <sequence type="displayed"/>
    </isoform>
    <text>A number of isoforms are produced. According to EST sequences.</text>
</comment>